<name>HEM3_PARMW</name>
<evidence type="ECO:0000255" key="1">
    <source>
        <dbReference type="HAMAP-Rule" id="MF_00260"/>
    </source>
</evidence>
<gene>
    <name evidence="1" type="primary">hemC</name>
    <name type="ordered locus">SYNW1785</name>
</gene>
<organism>
    <name type="scientific">Parasynechococcus marenigrum (strain WH8102)</name>
    <dbReference type="NCBI Taxonomy" id="84588"/>
    <lineage>
        <taxon>Bacteria</taxon>
        <taxon>Bacillati</taxon>
        <taxon>Cyanobacteriota</taxon>
        <taxon>Cyanophyceae</taxon>
        <taxon>Synechococcales</taxon>
        <taxon>Prochlorococcaceae</taxon>
        <taxon>Parasynechococcus</taxon>
        <taxon>Parasynechococcus marenigrum</taxon>
    </lineage>
</organism>
<reference key="1">
    <citation type="journal article" date="2003" name="Nature">
        <title>The genome of a motile marine Synechococcus.</title>
        <authorList>
            <person name="Palenik B."/>
            <person name="Brahamsha B."/>
            <person name="Larimer F.W."/>
            <person name="Land M.L."/>
            <person name="Hauser L."/>
            <person name="Chain P."/>
            <person name="Lamerdin J.E."/>
            <person name="Regala W."/>
            <person name="Allen E.E."/>
            <person name="McCarren J."/>
            <person name="Paulsen I.T."/>
            <person name="Dufresne A."/>
            <person name="Partensky F."/>
            <person name="Webb E.A."/>
            <person name="Waterbury J."/>
        </authorList>
    </citation>
    <scope>NUCLEOTIDE SEQUENCE [LARGE SCALE GENOMIC DNA]</scope>
    <source>
        <strain>WH8102</strain>
    </source>
</reference>
<keyword id="KW-0149">Chlorophyll biosynthesis</keyword>
<keyword id="KW-0627">Porphyrin biosynthesis</keyword>
<keyword id="KW-0808">Transferase</keyword>
<accession>Q7U5C2</accession>
<comment type="function">
    <text evidence="1">Tetrapolymerization of the monopyrrole PBG into the hydroxymethylbilane pre-uroporphyrinogen in several discrete steps.</text>
</comment>
<comment type="catalytic activity">
    <reaction evidence="1">
        <text>4 porphobilinogen + H2O = hydroxymethylbilane + 4 NH4(+)</text>
        <dbReference type="Rhea" id="RHEA:13185"/>
        <dbReference type="ChEBI" id="CHEBI:15377"/>
        <dbReference type="ChEBI" id="CHEBI:28938"/>
        <dbReference type="ChEBI" id="CHEBI:57845"/>
        <dbReference type="ChEBI" id="CHEBI:58126"/>
        <dbReference type="EC" id="2.5.1.61"/>
    </reaction>
</comment>
<comment type="cofactor">
    <cofactor evidence="1">
        <name>dipyrromethane</name>
        <dbReference type="ChEBI" id="CHEBI:60342"/>
    </cofactor>
    <text evidence="1">Binds 1 dipyrromethane group covalently.</text>
</comment>
<comment type="pathway">
    <text evidence="1">Porphyrin-containing compound metabolism; protoporphyrin-IX biosynthesis; coproporphyrinogen-III from 5-aminolevulinate: step 2/4.</text>
</comment>
<comment type="pathway">
    <text evidence="1">Porphyrin-containing compound metabolism; chlorophyll biosynthesis.</text>
</comment>
<comment type="subunit">
    <text evidence="1">Monomer.</text>
</comment>
<comment type="miscellaneous">
    <text evidence="1">The porphobilinogen subunits are added to the dipyrromethane group.</text>
</comment>
<comment type="similarity">
    <text evidence="1">Belongs to the HMBS family.</text>
</comment>
<sequence>MALTELRIASRRSQLAMVQTNWVKAELEKAHPGLTITVEAMATQGDKILDVALAKIGDKGLFTKELEAQMLVGRAEIAVHSLKDLPTNLPEGLMLGCITEREDPADALVVNAKNANHKLDTLPEGAVVGTSSLRRLAQLRHHYPHLSFKDVRGNVITRLEKLDSGDYDCLILAAAGLERLGFGNRIHQIIPGDISLHAVGQGALGIECVEDKPEVLEIIKVLEHTTTSRRCLAERAFLRELEGGCQVPIGVNSQINNEELTLTGMVASLDGKRLIRDEASGSAADPESIGIELAGKLKHQGAGAILKEIFDEVRPEA</sequence>
<feature type="chain" id="PRO_0000143002" description="Porphobilinogen deaminase">
    <location>
        <begin position="1"/>
        <end position="317"/>
    </location>
</feature>
<feature type="modified residue" description="S-(dipyrrolylmethanemethyl)cysteine" evidence="1">
    <location>
        <position position="245"/>
    </location>
</feature>
<dbReference type="EC" id="2.5.1.61" evidence="1"/>
<dbReference type="EMBL" id="BX569693">
    <property type="protein sequence ID" value="CAE08300.1"/>
    <property type="molecule type" value="Genomic_DNA"/>
</dbReference>
<dbReference type="RefSeq" id="WP_011128645.1">
    <property type="nucleotide sequence ID" value="NC_005070.1"/>
</dbReference>
<dbReference type="SMR" id="Q7U5C2"/>
<dbReference type="STRING" id="84588.SYNW1785"/>
<dbReference type="KEGG" id="syw:SYNW1785"/>
<dbReference type="eggNOG" id="COG0181">
    <property type="taxonomic scope" value="Bacteria"/>
</dbReference>
<dbReference type="HOGENOM" id="CLU_019704_0_1_3"/>
<dbReference type="UniPathway" id="UPA00251">
    <property type="reaction ID" value="UER00319"/>
</dbReference>
<dbReference type="UniPathway" id="UPA00668"/>
<dbReference type="Proteomes" id="UP000001422">
    <property type="component" value="Chromosome"/>
</dbReference>
<dbReference type="GO" id="GO:0005737">
    <property type="term" value="C:cytoplasm"/>
    <property type="evidence" value="ECO:0007669"/>
    <property type="project" value="TreeGrafter"/>
</dbReference>
<dbReference type="GO" id="GO:0004418">
    <property type="term" value="F:hydroxymethylbilane synthase activity"/>
    <property type="evidence" value="ECO:0007669"/>
    <property type="project" value="UniProtKB-UniRule"/>
</dbReference>
<dbReference type="GO" id="GO:0015995">
    <property type="term" value="P:chlorophyll biosynthetic process"/>
    <property type="evidence" value="ECO:0007669"/>
    <property type="project" value="UniProtKB-UniRule"/>
</dbReference>
<dbReference type="GO" id="GO:0006782">
    <property type="term" value="P:protoporphyrinogen IX biosynthetic process"/>
    <property type="evidence" value="ECO:0007669"/>
    <property type="project" value="UniProtKB-UniRule"/>
</dbReference>
<dbReference type="CDD" id="cd13645">
    <property type="entry name" value="PBP2_HuPBGD_like"/>
    <property type="match status" value="1"/>
</dbReference>
<dbReference type="FunFam" id="3.30.160.40:FF:000002">
    <property type="entry name" value="Porphobilinogen deaminase"/>
    <property type="match status" value="1"/>
</dbReference>
<dbReference type="FunFam" id="3.40.190.10:FF:000004">
    <property type="entry name" value="Porphobilinogen deaminase"/>
    <property type="match status" value="1"/>
</dbReference>
<dbReference type="FunFam" id="3.40.190.10:FF:000005">
    <property type="entry name" value="Porphobilinogen deaminase"/>
    <property type="match status" value="1"/>
</dbReference>
<dbReference type="Gene3D" id="3.40.190.10">
    <property type="entry name" value="Periplasmic binding protein-like II"/>
    <property type="match status" value="2"/>
</dbReference>
<dbReference type="Gene3D" id="3.30.160.40">
    <property type="entry name" value="Porphobilinogen deaminase, C-terminal domain"/>
    <property type="match status" value="1"/>
</dbReference>
<dbReference type="HAMAP" id="MF_00260">
    <property type="entry name" value="Porphobil_deam"/>
    <property type="match status" value="1"/>
</dbReference>
<dbReference type="InterPro" id="IPR000860">
    <property type="entry name" value="HemC"/>
</dbReference>
<dbReference type="InterPro" id="IPR022419">
    <property type="entry name" value="Porphobilin_deaminase_cofac_BS"/>
</dbReference>
<dbReference type="InterPro" id="IPR022417">
    <property type="entry name" value="Porphobilin_deaminase_N"/>
</dbReference>
<dbReference type="InterPro" id="IPR022418">
    <property type="entry name" value="Porphobilinogen_deaminase_C"/>
</dbReference>
<dbReference type="InterPro" id="IPR036803">
    <property type="entry name" value="Porphobilinogen_deaminase_C_sf"/>
</dbReference>
<dbReference type="NCBIfam" id="TIGR00212">
    <property type="entry name" value="hemC"/>
    <property type="match status" value="1"/>
</dbReference>
<dbReference type="PANTHER" id="PTHR11557">
    <property type="entry name" value="PORPHOBILINOGEN DEAMINASE"/>
    <property type="match status" value="1"/>
</dbReference>
<dbReference type="PANTHER" id="PTHR11557:SF0">
    <property type="entry name" value="PORPHOBILINOGEN DEAMINASE"/>
    <property type="match status" value="1"/>
</dbReference>
<dbReference type="Pfam" id="PF01379">
    <property type="entry name" value="Porphobil_deam"/>
    <property type="match status" value="1"/>
</dbReference>
<dbReference type="Pfam" id="PF03900">
    <property type="entry name" value="Porphobil_deamC"/>
    <property type="match status" value="1"/>
</dbReference>
<dbReference type="PIRSF" id="PIRSF001438">
    <property type="entry name" value="4pyrrol_synth_OHMeBilane_synth"/>
    <property type="match status" value="1"/>
</dbReference>
<dbReference type="PRINTS" id="PR00151">
    <property type="entry name" value="PORPHBDMNASE"/>
</dbReference>
<dbReference type="SUPFAM" id="SSF53850">
    <property type="entry name" value="Periplasmic binding protein-like II"/>
    <property type="match status" value="1"/>
</dbReference>
<dbReference type="SUPFAM" id="SSF54782">
    <property type="entry name" value="Porphobilinogen deaminase (hydroxymethylbilane synthase), C-terminal domain"/>
    <property type="match status" value="1"/>
</dbReference>
<dbReference type="PROSITE" id="PS00533">
    <property type="entry name" value="PORPHOBILINOGEN_DEAM"/>
    <property type="match status" value="1"/>
</dbReference>
<protein>
    <recommendedName>
        <fullName evidence="1">Porphobilinogen deaminase</fullName>
        <shortName evidence="1">PBG</shortName>
        <ecNumber evidence="1">2.5.1.61</ecNumber>
    </recommendedName>
    <alternativeName>
        <fullName evidence="1">Hydroxymethylbilane synthase</fullName>
        <shortName evidence="1">HMBS</shortName>
    </alternativeName>
    <alternativeName>
        <fullName evidence="1">Pre-uroporphyrinogen synthase</fullName>
    </alternativeName>
</protein>
<proteinExistence type="inferred from homology"/>